<protein>
    <recommendedName>
        <fullName>Type-1 fimbrial protein, C chain</fullName>
    </recommendedName>
    <alternativeName>
        <fullName>Type-1C pilin</fullName>
    </alternativeName>
</protein>
<name>FIM1C_ECOLX</name>
<dbReference type="EMBL" id="AF298200">
    <property type="protein sequence ID" value="AAA23775.1"/>
    <property type="molecule type" value="Genomic_DNA"/>
</dbReference>
<dbReference type="RefSeq" id="WP_000768217.1">
    <property type="nucleotide sequence ID" value="NZ_WIKS01000122.1"/>
</dbReference>
<dbReference type="SMR" id="P62605"/>
<dbReference type="OMA" id="ATFVMKY"/>
<dbReference type="GO" id="GO:0009289">
    <property type="term" value="C:pilus"/>
    <property type="evidence" value="ECO:0007669"/>
    <property type="project" value="UniProtKB-SubCell"/>
</dbReference>
<dbReference type="GO" id="GO:0043709">
    <property type="term" value="P:cell adhesion involved in single-species biofilm formation"/>
    <property type="evidence" value="ECO:0007669"/>
    <property type="project" value="TreeGrafter"/>
</dbReference>
<dbReference type="FunFam" id="2.60.40.1090:FF:000001">
    <property type="entry name" value="Type-1 fimbrial major subunit"/>
    <property type="match status" value="1"/>
</dbReference>
<dbReference type="Gene3D" id="2.60.40.1090">
    <property type="entry name" value="Fimbrial-type adhesion domain"/>
    <property type="match status" value="1"/>
</dbReference>
<dbReference type="InterPro" id="IPR000259">
    <property type="entry name" value="Adhesion_dom_fimbrial"/>
</dbReference>
<dbReference type="InterPro" id="IPR036937">
    <property type="entry name" value="Adhesion_dom_fimbrial_sf"/>
</dbReference>
<dbReference type="InterPro" id="IPR008966">
    <property type="entry name" value="Adhesion_dom_sf"/>
</dbReference>
<dbReference type="InterPro" id="IPR050263">
    <property type="entry name" value="Bact_Fimbrial_Adh_Pro"/>
</dbReference>
<dbReference type="NCBIfam" id="NF011741">
    <property type="entry name" value="PRK15194.1"/>
    <property type="match status" value="1"/>
</dbReference>
<dbReference type="PANTHER" id="PTHR33420">
    <property type="entry name" value="FIMBRIAL SUBUNIT ELFA-RELATED"/>
    <property type="match status" value="1"/>
</dbReference>
<dbReference type="PANTHER" id="PTHR33420:SF12">
    <property type="entry name" value="FIMBRIN-LIKE PROTEIN FIMI-RELATED"/>
    <property type="match status" value="1"/>
</dbReference>
<dbReference type="Pfam" id="PF00419">
    <property type="entry name" value="Fimbrial"/>
    <property type="match status" value="1"/>
</dbReference>
<dbReference type="SUPFAM" id="SSF49401">
    <property type="entry name" value="Bacterial adhesins"/>
    <property type="match status" value="1"/>
</dbReference>
<comment type="function">
    <text>Fimbriae (also called pili), polar filaments radiating from the surface of the bacterium to a length of 0.5-1.5 micrometers and numbering 100-300 per cell, enable bacteria to colonize the epithelium of specific host organs.</text>
</comment>
<comment type="subcellular location">
    <subcellularLocation>
        <location>Fimbrium</location>
    </subcellularLocation>
</comment>
<comment type="similarity">
    <text evidence="1">Belongs to the fimbrial protein family.</text>
</comment>
<reference key="1">
    <citation type="journal article" date="1985" name="Gene">
        <title>Type 1C fimbriae of a uropathogenic Escherichia coli strain: cloning and characterization of the genes involved in the expression of the 1C antigen and nucleotide sequence of the subunit gene.</title>
        <authorList>
            <person name="van Die I."/>
            <person name="van Geffen B."/>
            <person name="Hoekstra W."/>
            <person name="Bergmans H."/>
        </authorList>
    </citation>
    <scope>NUCLEOTIDE SEQUENCE [GENOMIC DNA]</scope>
    <source>
        <strain>AD110 / UPEC</strain>
    </source>
</reference>
<organism>
    <name type="scientific">Escherichia coli</name>
    <dbReference type="NCBI Taxonomy" id="562"/>
    <lineage>
        <taxon>Bacteria</taxon>
        <taxon>Pseudomonadati</taxon>
        <taxon>Pseudomonadota</taxon>
        <taxon>Gammaproteobacteria</taxon>
        <taxon>Enterobacterales</taxon>
        <taxon>Enterobacteriaceae</taxon>
        <taxon>Escherichia</taxon>
    </lineage>
</organism>
<proteinExistence type="inferred from homology"/>
<feature type="signal peptide">
    <location>
        <begin position="1"/>
        <end position="23"/>
    </location>
</feature>
<feature type="chain" id="PRO_0000009175" description="Type-1 fimbrial protein, C chain">
    <location>
        <begin position="24"/>
        <end position="180"/>
    </location>
</feature>
<feature type="disulfide bond" evidence="1">
    <location>
        <begin position="44"/>
        <end position="84"/>
    </location>
</feature>
<keyword id="KW-1015">Disulfide bond</keyword>
<keyword id="KW-0281">Fimbrium</keyword>
<keyword id="KW-0732">Signal</keyword>
<evidence type="ECO:0000305" key="1"/>
<gene>
    <name type="primary">pilC</name>
    <name type="synonym">focA</name>
</gene>
<sequence length="180" mass="18328">MKLKFISMAVFSALTLGVATNASAVTTVNGGTVHFKGEVVNAACAVNTNSFDQTVNLGQVRSERLKVDGAKSNPVGFTIELNDCDSQVSAGAGIVFSGPAVTGKTDVLALQSSAAGSATNVGVQITDHTGKVVPLDGTASSTFTLTDGTNKIPFQAVYYATGQATAGIANADATFKVQYQ</sequence>
<accession>P62605</accession>
<accession>P08561</accession>